<reference key="1">
    <citation type="journal article" date="1998" name="Science">
        <title>Complete genome sequence of Treponema pallidum, the syphilis spirochete.</title>
        <authorList>
            <person name="Fraser C.M."/>
            <person name="Norris S.J."/>
            <person name="Weinstock G.M."/>
            <person name="White O."/>
            <person name="Sutton G.G."/>
            <person name="Dodson R.J."/>
            <person name="Gwinn M.L."/>
            <person name="Hickey E.K."/>
            <person name="Clayton R.A."/>
            <person name="Ketchum K.A."/>
            <person name="Sodergren E."/>
            <person name="Hardham J.M."/>
            <person name="McLeod M.P."/>
            <person name="Salzberg S.L."/>
            <person name="Peterson J.D."/>
            <person name="Khalak H.G."/>
            <person name="Richardson D.L."/>
            <person name="Howell J.K."/>
            <person name="Chidambaram M."/>
            <person name="Utterback T.R."/>
            <person name="McDonald L.A."/>
            <person name="Artiach P."/>
            <person name="Bowman C."/>
            <person name="Cotton M.D."/>
            <person name="Fujii C."/>
            <person name="Garland S.A."/>
            <person name="Hatch B."/>
            <person name="Horst K."/>
            <person name="Roberts K.M."/>
            <person name="Sandusky M."/>
            <person name="Weidman J.F."/>
            <person name="Smith H.O."/>
            <person name="Venter J.C."/>
        </authorList>
    </citation>
    <scope>NUCLEOTIDE SEQUENCE [LARGE SCALE GENOMIC DNA]</scope>
    <source>
        <strain>Nichols</strain>
    </source>
</reference>
<accession>O83728</accession>
<dbReference type="EC" id="2.7.9.1" evidence="3"/>
<dbReference type="EMBL" id="AE000520">
    <property type="protein sequence ID" value="AAC65714.1"/>
    <property type="molecule type" value="Genomic_DNA"/>
</dbReference>
<dbReference type="PIR" id="G71286">
    <property type="entry name" value="G71286"/>
</dbReference>
<dbReference type="RefSeq" id="WP_010882191.1">
    <property type="nucleotide sequence ID" value="NC_021490.2"/>
</dbReference>
<dbReference type="SMR" id="O83728"/>
<dbReference type="STRING" id="243276.TP_0746"/>
<dbReference type="EnsemblBacteria" id="AAC65714">
    <property type="protein sequence ID" value="AAC65714"/>
    <property type="gene ID" value="TP_0746"/>
</dbReference>
<dbReference type="KEGG" id="tpa:TP_0746"/>
<dbReference type="KEGG" id="tpw:TPANIC_0746"/>
<dbReference type="eggNOG" id="COG0574">
    <property type="taxonomic scope" value="Bacteria"/>
</dbReference>
<dbReference type="eggNOG" id="COG1080">
    <property type="taxonomic scope" value="Bacteria"/>
</dbReference>
<dbReference type="HOGENOM" id="CLU_015345_0_2_12"/>
<dbReference type="OrthoDB" id="9765468at2"/>
<dbReference type="Proteomes" id="UP000000811">
    <property type="component" value="Chromosome"/>
</dbReference>
<dbReference type="GO" id="GO:0005524">
    <property type="term" value="F:ATP binding"/>
    <property type="evidence" value="ECO:0007669"/>
    <property type="project" value="UniProtKB-KW"/>
</dbReference>
<dbReference type="GO" id="GO:0016301">
    <property type="term" value="F:kinase activity"/>
    <property type="evidence" value="ECO:0007669"/>
    <property type="project" value="UniProtKB-KW"/>
</dbReference>
<dbReference type="GO" id="GO:0046872">
    <property type="term" value="F:metal ion binding"/>
    <property type="evidence" value="ECO:0007669"/>
    <property type="project" value="UniProtKB-KW"/>
</dbReference>
<dbReference type="GO" id="GO:0050242">
    <property type="term" value="F:pyruvate, phosphate dikinase activity"/>
    <property type="evidence" value="ECO:0007669"/>
    <property type="project" value="UniProtKB-EC"/>
</dbReference>
<dbReference type="Gene3D" id="1.20.80.30">
    <property type="match status" value="1"/>
</dbReference>
<dbReference type="Gene3D" id="3.30.1490.20">
    <property type="entry name" value="ATP-grasp fold, A domain"/>
    <property type="match status" value="1"/>
</dbReference>
<dbReference type="Gene3D" id="3.30.470.20">
    <property type="entry name" value="ATP-grasp fold, B domain"/>
    <property type="match status" value="1"/>
</dbReference>
<dbReference type="Gene3D" id="3.20.20.60">
    <property type="entry name" value="Phosphoenolpyruvate-binding domains"/>
    <property type="match status" value="1"/>
</dbReference>
<dbReference type="Gene3D" id="3.50.30.10">
    <property type="entry name" value="Phosphohistidine domain"/>
    <property type="match status" value="1"/>
</dbReference>
<dbReference type="Gene3D" id="1.10.189.10">
    <property type="entry name" value="Pyruvate Phosphate Dikinase, domain 2"/>
    <property type="match status" value="1"/>
</dbReference>
<dbReference type="InterPro" id="IPR013815">
    <property type="entry name" value="ATP_grasp_subdomain_1"/>
</dbReference>
<dbReference type="InterPro" id="IPR008279">
    <property type="entry name" value="PEP-util_enz_mobile_dom"/>
</dbReference>
<dbReference type="InterPro" id="IPR018274">
    <property type="entry name" value="PEP_util_AS"/>
</dbReference>
<dbReference type="InterPro" id="IPR000121">
    <property type="entry name" value="PEP_util_C"/>
</dbReference>
<dbReference type="InterPro" id="IPR023151">
    <property type="entry name" value="PEP_util_CS"/>
</dbReference>
<dbReference type="InterPro" id="IPR036637">
    <property type="entry name" value="Phosphohistidine_dom_sf"/>
</dbReference>
<dbReference type="InterPro" id="IPR010121">
    <property type="entry name" value="Pyruvate_phosphate_dikinase"/>
</dbReference>
<dbReference type="InterPro" id="IPR015813">
    <property type="entry name" value="Pyrv/PenolPyrv_kinase-like_dom"/>
</dbReference>
<dbReference type="InterPro" id="IPR040442">
    <property type="entry name" value="Pyrv_kinase-like_dom_sf"/>
</dbReference>
<dbReference type="PANTHER" id="PTHR22931">
    <property type="entry name" value="PHOSPHOENOLPYRUVATE DIKINASE-RELATED"/>
    <property type="match status" value="1"/>
</dbReference>
<dbReference type="PANTHER" id="PTHR22931:SF9">
    <property type="entry name" value="PYRUVATE, PHOSPHATE DIKINASE 1, CHLOROPLASTIC"/>
    <property type="match status" value="1"/>
</dbReference>
<dbReference type="Pfam" id="PF00391">
    <property type="entry name" value="PEP-utilizers"/>
    <property type="match status" value="1"/>
</dbReference>
<dbReference type="Pfam" id="PF02896">
    <property type="entry name" value="PEP-utilizers_C"/>
    <property type="match status" value="1"/>
</dbReference>
<dbReference type="PIRSF" id="PIRSF000853">
    <property type="entry name" value="PPDK"/>
    <property type="match status" value="1"/>
</dbReference>
<dbReference type="SUPFAM" id="SSF56059">
    <property type="entry name" value="Glutathione synthetase ATP-binding domain-like"/>
    <property type="match status" value="1"/>
</dbReference>
<dbReference type="SUPFAM" id="SSF51621">
    <property type="entry name" value="Phosphoenolpyruvate/pyruvate domain"/>
    <property type="match status" value="1"/>
</dbReference>
<dbReference type="SUPFAM" id="SSF52009">
    <property type="entry name" value="Phosphohistidine domain"/>
    <property type="match status" value="1"/>
</dbReference>
<dbReference type="PROSITE" id="PS00742">
    <property type="entry name" value="PEP_ENZYMES_2"/>
    <property type="match status" value="1"/>
</dbReference>
<dbReference type="PROSITE" id="PS00370">
    <property type="entry name" value="PEP_ENZYMES_PHOS_SITE"/>
    <property type="match status" value="1"/>
</dbReference>
<name>PPDK_TREPA</name>
<keyword id="KW-0067">ATP-binding</keyword>
<keyword id="KW-0418">Kinase</keyword>
<keyword id="KW-0460">Magnesium</keyword>
<keyword id="KW-0479">Metal-binding</keyword>
<keyword id="KW-0547">Nucleotide-binding</keyword>
<keyword id="KW-0597">Phosphoprotein</keyword>
<keyword id="KW-1185">Reference proteome</keyword>
<keyword id="KW-0808">Transferase</keyword>
<evidence type="ECO:0000250" key="1"/>
<evidence type="ECO:0000250" key="2">
    <source>
        <dbReference type="UniProtKB" id="P11155"/>
    </source>
</evidence>
<evidence type="ECO:0000250" key="3">
    <source>
        <dbReference type="UniProtKB" id="P22983"/>
    </source>
</evidence>
<evidence type="ECO:0000256" key="4">
    <source>
        <dbReference type="SAM" id="MobiDB-lite"/>
    </source>
</evidence>
<evidence type="ECO:0000305" key="5"/>
<protein>
    <recommendedName>
        <fullName>Pyruvate, phosphate dikinase</fullName>
        <ecNumber evidence="3">2.7.9.1</ecNumber>
    </recommendedName>
    <alternativeName>
        <fullName>Pyruvate, orthophosphate dikinase</fullName>
    </alternativeName>
</protein>
<feature type="chain" id="PRO_0000147050" description="Pyruvate, phosphate dikinase">
    <location>
        <begin position="1"/>
        <end position="901"/>
    </location>
</feature>
<feature type="region of interest" description="N-terminal">
    <location>
        <begin position="1"/>
        <end position="321"/>
    </location>
</feature>
<feature type="region of interest" description="Linker 1">
    <location>
        <begin position="322"/>
        <end position="380"/>
    </location>
</feature>
<feature type="region of interest" description="Central">
    <location>
        <begin position="381"/>
        <end position="482"/>
    </location>
</feature>
<feature type="region of interest" description="Linker 2">
    <location>
        <begin position="483"/>
        <end position="522"/>
    </location>
</feature>
<feature type="region of interest" description="C-terminal">
    <location>
        <begin position="523"/>
        <end position="901"/>
    </location>
</feature>
<feature type="region of interest" description="Disordered" evidence="4">
    <location>
        <begin position="879"/>
        <end position="901"/>
    </location>
</feature>
<feature type="active site" description="Tele-phosphohistidine intermediate" evidence="2">
    <location>
        <position position="442"/>
    </location>
</feature>
<feature type="active site" description="Proton donor" evidence="2">
    <location>
        <position position="835"/>
    </location>
</feature>
<feature type="binding site" evidence="2">
    <location>
        <position position="550"/>
    </location>
    <ligand>
        <name>substrate</name>
    </ligand>
</feature>
<feature type="binding site" evidence="2">
    <location>
        <position position="606"/>
    </location>
    <ligand>
        <name>substrate</name>
    </ligand>
</feature>
<feature type="binding site" evidence="2">
    <location>
        <position position="750"/>
    </location>
    <ligand>
        <name>Mg(2+)</name>
        <dbReference type="ChEBI" id="CHEBI:18420"/>
    </ligand>
</feature>
<feature type="binding site" evidence="2">
    <location>
        <position position="750"/>
    </location>
    <ligand>
        <name>substrate</name>
    </ligand>
</feature>
<feature type="binding site" evidence="2">
    <location>
        <position position="771"/>
    </location>
    <ligand>
        <name>substrate</name>
    </ligand>
</feature>
<feature type="binding site" evidence="2">
    <location>
        <position position="772"/>
    </location>
    <ligand>
        <name>substrate</name>
    </ligand>
</feature>
<feature type="binding site" evidence="2">
    <location>
        <position position="773"/>
    </location>
    <ligand>
        <name>substrate</name>
    </ligand>
</feature>
<feature type="binding site" evidence="2">
    <location>
        <position position="774"/>
    </location>
    <ligand>
        <name>Mg(2+)</name>
        <dbReference type="ChEBI" id="CHEBI:18420"/>
    </ligand>
</feature>
<feature type="binding site" evidence="2">
    <location>
        <position position="774"/>
    </location>
    <ligand>
        <name>substrate</name>
    </ligand>
</feature>
<feature type="modified residue" description="Phosphoserine; by PDRP1" evidence="1">
    <location>
        <position position="440"/>
    </location>
</feature>
<gene>
    <name type="primary">ppdK</name>
    <name type="ordered locus">TP_0746</name>
</gene>
<sequence length="901" mass="100298">MNIAKSIHFLSNKEALDKRLDRGLLGIRGRQADELSSLGLPVLPSVVIDATVSRSLYGEKLRSALSPYLRKFTLLNRKEYADAKNPMLLKVVLSPNLAISNYPVLHNFGLTRDTFAGFAERVGEHFATHEVFFLLKGVFGVLLGIAESEENTKGASEFVETLKEIEVFLQGGKSSPSGREAMNRYRALLPDGFFDDAYVQLEEAVRLVSKLLSFEEDGEDGVAILIQPMVYGNYGGGSYSGRFFSRNIITGEKKLQGQYFEERFDECDAEGSDVNAIKPAYLKQLQDIAWKLEDHSREIREVRFTIEAGSLWLIEQKPVEAKSTISLVRLLLDLYEREVVDAEYVVKSVKPGQLNEILHPVIDMTSVTGLKSSQGGIIGVPGAAVGRVYFTADSLIEAWRVAKMGGQDTRCILCMPATYAGDVKAIEVATGVLSNEGGYSAHASVVARQYGKISLVRPDMKIYSDKAVVDGMTINEGDFVTLNVPYYGESTLYMGAAQLIEPDPETSGLVSFIELAKGFVRSFHVRANADSPHDAELALAFGAQGIGLCRTEHMFFKEDRINVFRRMIFSENAEERTGSLKQLQKMQGEDFYGIFKVMQGHEVTIRLLDAPLHEFLPHGESEVSKFLEYLEKVCGKGLSREELQERISMLSEVNPMLGHRGCRIAISYPEIYAMQVRAVFEAVYRLQKEKISVYPEIMIPIVMNCRELKQIVYGKKIEGHAYQGIGSIEEEVRLALKAKEVDYKVGAMIELPAAALSADEIARYAQFFSFGTNDLTQTTLGLSRDDFNTFMPDYTMYDLVDGNPFAILDARVRELIEVAMQRGRLARPDIQLGLCGEHGSRSENIRFCMEVGLDYVSCSSYSVPIALLAIAQAEIENAEKEGRKPAWRGRSSAKSGGRRAR</sequence>
<comment type="function">
    <text evidence="3">Catalyzes the reversible phosphorylation of pyruvate and phosphate.</text>
</comment>
<comment type="catalytic activity">
    <reaction evidence="3">
        <text>pyruvate + phosphate + ATP = phosphoenolpyruvate + AMP + diphosphate + H(+)</text>
        <dbReference type="Rhea" id="RHEA:10756"/>
        <dbReference type="ChEBI" id="CHEBI:15361"/>
        <dbReference type="ChEBI" id="CHEBI:15378"/>
        <dbReference type="ChEBI" id="CHEBI:30616"/>
        <dbReference type="ChEBI" id="CHEBI:33019"/>
        <dbReference type="ChEBI" id="CHEBI:43474"/>
        <dbReference type="ChEBI" id="CHEBI:58702"/>
        <dbReference type="ChEBI" id="CHEBI:456215"/>
        <dbReference type="EC" id="2.7.9.1"/>
    </reaction>
</comment>
<comment type="cofactor">
    <cofactor evidence="2">
        <name>Mg(2+)</name>
        <dbReference type="ChEBI" id="CHEBI:18420"/>
    </cofactor>
</comment>
<comment type="activity regulation">
    <text evidence="1">Activated by light-induced dephosphorylation. Inhibited by dark-induced phosphorylation. Both reactions are catalyzed by PDRP1 (By similarity).</text>
</comment>
<comment type="subunit">
    <text evidence="1">Homodimer.</text>
</comment>
<comment type="domain">
    <text evidence="1">The N-terminal domain contains the ATP/Pi active site, the central domain the pyrophosphate/phosphate carrier histidine, and the C-terminal domain the pyruvate active site.</text>
</comment>
<comment type="PTM">
    <text evidence="1">Phosphorylation of Ser-440 in the dark inactivates the enzyme. Dephosphorylation upon light stimulation reactivates the enzyme (By similarity).</text>
</comment>
<comment type="miscellaneous">
    <text>The reaction takes place in three steps, each mediated by a carrier histidine residue located on the surface of the central domain. The two first partial reactions are catalyzed at an active site located on the N-terminal domain, and the third partial reaction is catalyzed at an active site located on the C-terminal domain. For catalytic turnover, the central domain swivels from the concave surface of the N-terminal domain to that of the C-terminal domain.</text>
</comment>
<comment type="similarity">
    <text evidence="5">Belongs to the PEP-utilizing enzyme family.</text>
</comment>
<proteinExistence type="inferred from homology"/>
<organism>
    <name type="scientific">Treponema pallidum (strain Nichols)</name>
    <dbReference type="NCBI Taxonomy" id="243276"/>
    <lineage>
        <taxon>Bacteria</taxon>
        <taxon>Pseudomonadati</taxon>
        <taxon>Spirochaetota</taxon>
        <taxon>Spirochaetia</taxon>
        <taxon>Spirochaetales</taxon>
        <taxon>Treponemataceae</taxon>
        <taxon>Treponema</taxon>
    </lineage>
</organism>